<evidence type="ECO:0000255" key="1">
    <source>
        <dbReference type="PROSITE-ProRule" id="PRU00353"/>
    </source>
</evidence>
<evidence type="ECO:0000256" key="2">
    <source>
        <dbReference type="SAM" id="MobiDB-lite"/>
    </source>
</evidence>
<evidence type="ECO:0000269" key="3">
    <source>
    </source>
</evidence>
<evidence type="ECO:0000269" key="4">
    <source>
    </source>
</evidence>
<evidence type="ECO:0000303" key="5">
    <source>
    </source>
</evidence>
<evidence type="ECO:0000305" key="6"/>
<evidence type="ECO:0000312" key="7">
    <source>
        <dbReference type="EMBL" id="BAC22555.1"/>
    </source>
</evidence>
<evidence type="ECO:0000312" key="8">
    <source>
        <dbReference type="EMBL" id="BAC55651.1"/>
    </source>
</evidence>
<evidence type="ECO:0000312" key="9">
    <source>
        <dbReference type="EMBL" id="BAT02186.1"/>
    </source>
</evidence>
<evidence type="ECO:0000312" key="10">
    <source>
        <dbReference type="EMBL" id="EAZ40329.1"/>
    </source>
</evidence>
<reference key="1">
    <citation type="journal article" date="2005" name="Nature">
        <title>The map-based sequence of the rice genome.</title>
        <authorList>
            <consortium name="International rice genome sequencing project (IRGSP)"/>
        </authorList>
    </citation>
    <scope>NUCLEOTIDE SEQUENCE [LARGE SCALE GENOMIC DNA]</scope>
    <source>
        <strain>cv. Nipponbare</strain>
    </source>
</reference>
<reference key="2">
    <citation type="journal article" date="2008" name="Nucleic Acids Res.">
        <title>The rice annotation project database (RAP-DB): 2008 update.</title>
        <authorList>
            <consortium name="The rice annotation project (RAP)"/>
        </authorList>
    </citation>
    <scope>GENOME REANNOTATION</scope>
    <source>
        <strain>cv. Nipponbare</strain>
    </source>
</reference>
<reference key="3">
    <citation type="journal article" date="2013" name="Rice">
        <title>Improvement of the Oryza sativa Nipponbare reference genome using next generation sequence and optical map data.</title>
        <authorList>
            <person name="Kawahara Y."/>
            <person name="de la Bastide M."/>
            <person name="Hamilton J.P."/>
            <person name="Kanamori H."/>
            <person name="McCombie W.R."/>
            <person name="Ouyang S."/>
            <person name="Schwartz D.C."/>
            <person name="Tanaka T."/>
            <person name="Wu J."/>
            <person name="Zhou S."/>
            <person name="Childs K.L."/>
            <person name="Davidson R.M."/>
            <person name="Lin H."/>
            <person name="Quesada-Ocampo L."/>
            <person name="Vaillancourt B."/>
            <person name="Sakai H."/>
            <person name="Lee S.S."/>
            <person name="Kim J."/>
            <person name="Numa H."/>
            <person name="Itoh T."/>
            <person name="Buell C.R."/>
            <person name="Matsumoto T."/>
        </authorList>
    </citation>
    <scope>GENOME REANNOTATION</scope>
    <source>
        <strain>cv. Nipponbare</strain>
    </source>
</reference>
<reference key="4">
    <citation type="journal article" date="2005" name="PLoS Biol.">
        <title>The genomes of Oryza sativa: a history of duplications.</title>
        <authorList>
            <person name="Yu J."/>
            <person name="Wang J."/>
            <person name="Lin W."/>
            <person name="Li S."/>
            <person name="Li H."/>
            <person name="Zhou J."/>
            <person name="Ni P."/>
            <person name="Dong W."/>
            <person name="Hu S."/>
            <person name="Zeng C."/>
            <person name="Zhang J."/>
            <person name="Zhang Y."/>
            <person name="Li R."/>
            <person name="Xu Z."/>
            <person name="Li S."/>
            <person name="Li X."/>
            <person name="Zheng H."/>
            <person name="Cong L."/>
            <person name="Lin L."/>
            <person name="Yin J."/>
            <person name="Geng J."/>
            <person name="Li G."/>
            <person name="Shi J."/>
            <person name="Liu J."/>
            <person name="Lv H."/>
            <person name="Li J."/>
            <person name="Wang J."/>
            <person name="Deng Y."/>
            <person name="Ran L."/>
            <person name="Shi X."/>
            <person name="Wang X."/>
            <person name="Wu Q."/>
            <person name="Li C."/>
            <person name="Ren X."/>
            <person name="Wang J."/>
            <person name="Wang X."/>
            <person name="Li D."/>
            <person name="Liu D."/>
            <person name="Zhang X."/>
            <person name="Ji Z."/>
            <person name="Zhao W."/>
            <person name="Sun Y."/>
            <person name="Zhang Z."/>
            <person name="Bao J."/>
            <person name="Han Y."/>
            <person name="Dong L."/>
            <person name="Ji J."/>
            <person name="Chen P."/>
            <person name="Wu S."/>
            <person name="Liu J."/>
            <person name="Xiao Y."/>
            <person name="Bu D."/>
            <person name="Tan J."/>
            <person name="Yang L."/>
            <person name="Ye C."/>
            <person name="Zhang J."/>
            <person name="Xu J."/>
            <person name="Zhou Y."/>
            <person name="Yu Y."/>
            <person name="Zhang B."/>
            <person name="Zhuang S."/>
            <person name="Wei H."/>
            <person name="Liu B."/>
            <person name="Lei M."/>
            <person name="Yu H."/>
            <person name="Li Y."/>
            <person name="Xu H."/>
            <person name="Wei S."/>
            <person name="He X."/>
            <person name="Fang L."/>
            <person name="Zhang Z."/>
            <person name="Zhang Y."/>
            <person name="Huang X."/>
            <person name="Su Z."/>
            <person name="Tong W."/>
            <person name="Li J."/>
            <person name="Tong Z."/>
            <person name="Li S."/>
            <person name="Ye J."/>
            <person name="Wang L."/>
            <person name="Fang L."/>
            <person name="Lei T."/>
            <person name="Chen C.-S."/>
            <person name="Chen H.-C."/>
            <person name="Xu Z."/>
            <person name="Li H."/>
            <person name="Huang H."/>
            <person name="Zhang F."/>
            <person name="Xu H."/>
            <person name="Li N."/>
            <person name="Zhao C."/>
            <person name="Li S."/>
            <person name="Dong L."/>
            <person name="Huang Y."/>
            <person name="Li L."/>
            <person name="Xi Y."/>
            <person name="Qi Q."/>
            <person name="Li W."/>
            <person name="Zhang B."/>
            <person name="Hu W."/>
            <person name="Zhang Y."/>
            <person name="Tian X."/>
            <person name="Jiao Y."/>
            <person name="Liang X."/>
            <person name="Jin J."/>
            <person name="Gao L."/>
            <person name="Zheng W."/>
            <person name="Hao B."/>
            <person name="Liu S.-M."/>
            <person name="Wang W."/>
            <person name="Yuan L."/>
            <person name="Cao M."/>
            <person name="McDermott J."/>
            <person name="Samudrala R."/>
            <person name="Wang J."/>
            <person name="Wong G.K.-S."/>
            <person name="Yang H."/>
        </authorList>
    </citation>
    <scope>NUCLEOTIDE SEQUENCE [LARGE SCALE GENOMIC DNA]</scope>
    <source>
        <strain>cv. Nipponbare</strain>
    </source>
</reference>
<reference key="5">
    <citation type="journal article" date="2003" name="Science">
        <title>Collection, mapping, and annotation of over 28,000 cDNA clones from japonica rice.</title>
        <authorList>
            <consortium name="The rice full-length cDNA consortium"/>
        </authorList>
    </citation>
    <scope>NUCLEOTIDE SEQUENCE [LARGE SCALE MRNA]</scope>
    <source>
        <strain>cv. Nipponbare</strain>
    </source>
</reference>
<reference key="6">
    <citation type="journal article" date="2003" name="DNA Res.">
        <title>Comprehensive analysis of NAC family genes in Oryza sativa and Arabidopsis thaliana.</title>
        <authorList>
            <person name="Ooka H."/>
            <person name="Satoh K."/>
            <person name="Doi K."/>
            <person name="Nagata T."/>
            <person name="Otomo Y."/>
            <person name="Murakami K."/>
            <person name="Matsubara K."/>
            <person name="Osato N."/>
            <person name="Kawai J."/>
            <person name="Carninci P."/>
            <person name="Hayashizaki Y."/>
            <person name="Suzuki K."/>
            <person name="Kojima K."/>
            <person name="Takahara Y."/>
            <person name="Yamamoto K."/>
            <person name="Kikuchi S."/>
        </authorList>
    </citation>
    <scope>GENE FAMILY</scope>
    <scope>NOMENCLATURE</scope>
</reference>
<reference key="7">
    <citation type="journal article" date="2008" name="Mol. Genet. Genomics">
        <title>Systematic sequence analysis and identification of tissue-specific or stress-responsive genes of NAC transcription factor family in rice.</title>
        <authorList>
            <person name="Fang Y."/>
            <person name="You J."/>
            <person name="Xie K."/>
            <person name="Xie W."/>
            <person name="Xiong L."/>
        </authorList>
    </citation>
    <scope>TISSUE SPECIFICITY</scope>
    <scope>INDUCTION BY ABIOTIC STRESS</scope>
</reference>
<reference key="8">
    <citation type="journal article" date="2012" name="Plant Mol. Biol.">
        <title>Divergent functions of orthologous NAC transcription factors in wheat and rice.</title>
        <authorList>
            <person name="Distelfeld A."/>
            <person name="Pearce S.P."/>
            <person name="Avni R."/>
            <person name="Scherer B."/>
            <person name="Uauy C."/>
            <person name="Piston F."/>
            <person name="Slade A."/>
            <person name="Zhao R."/>
            <person name="Dubcovsky J."/>
        </authorList>
    </citation>
    <scope>FUNCTION</scope>
    <scope>TISSUE SPECIFICITY</scope>
    <scope>DEVELOPMENTAL STAGE</scope>
</reference>
<proteinExistence type="evidence at transcript level"/>
<dbReference type="EMBL" id="AP003866">
    <property type="protein sequence ID" value="BAC55651.1"/>
    <property type="molecule type" value="Genomic_DNA"/>
</dbReference>
<dbReference type="EMBL" id="AP003932">
    <property type="protein sequence ID" value="BAC22555.1"/>
    <property type="molecule type" value="Genomic_DNA"/>
</dbReference>
<dbReference type="EMBL" id="AP008213">
    <property type="protein sequence ID" value="BAF21931.1"/>
    <property type="molecule type" value="Genomic_DNA"/>
</dbReference>
<dbReference type="EMBL" id="AP014963">
    <property type="protein sequence ID" value="BAT02186.1"/>
    <property type="molecule type" value="Genomic_DNA"/>
</dbReference>
<dbReference type="EMBL" id="CM000144">
    <property type="protein sequence ID" value="EAZ40329.1"/>
    <property type="molecule type" value="Genomic_DNA"/>
</dbReference>
<dbReference type="EMBL" id="AK063406">
    <property type="status" value="NOT_ANNOTATED_CDS"/>
    <property type="molecule type" value="mRNA"/>
</dbReference>
<dbReference type="RefSeq" id="XP_015645677.1">
    <property type="nucleotide sequence ID" value="XM_015790191.1"/>
</dbReference>
<dbReference type="SMR" id="Q8H4S4"/>
<dbReference type="FunCoup" id="Q8H4S4">
    <property type="interactions" value="962"/>
</dbReference>
<dbReference type="STRING" id="39947.Q8H4S4"/>
<dbReference type="PaxDb" id="39947-Q8H4S4"/>
<dbReference type="EnsemblPlants" id="Os07t0566500-01">
    <property type="protein sequence ID" value="Os07t0566500-01"/>
    <property type="gene ID" value="Os07g0566500"/>
</dbReference>
<dbReference type="Gramene" id="Os07t0566500-01">
    <property type="protein sequence ID" value="Os07t0566500-01"/>
    <property type="gene ID" value="Os07g0566500"/>
</dbReference>
<dbReference type="KEGG" id="dosa:Os07g0566500"/>
<dbReference type="eggNOG" id="ENOG502QRBC">
    <property type="taxonomic scope" value="Eukaryota"/>
</dbReference>
<dbReference type="HOGENOM" id="CLU_035664_8_1_1"/>
<dbReference type="InParanoid" id="Q8H4S4"/>
<dbReference type="OMA" id="HHAIMGA"/>
<dbReference type="OrthoDB" id="1921961at2759"/>
<dbReference type="Proteomes" id="UP000000763">
    <property type="component" value="Chromosome 7"/>
</dbReference>
<dbReference type="Proteomes" id="UP000007752">
    <property type="component" value="Chromosome 7"/>
</dbReference>
<dbReference type="Proteomes" id="UP000059680">
    <property type="component" value="Chromosome 7"/>
</dbReference>
<dbReference type="GO" id="GO:0005634">
    <property type="term" value="C:nucleus"/>
    <property type="evidence" value="ECO:0007669"/>
    <property type="project" value="UniProtKB-SubCell"/>
</dbReference>
<dbReference type="GO" id="GO:0003677">
    <property type="term" value="F:DNA binding"/>
    <property type="evidence" value="ECO:0007669"/>
    <property type="project" value="UniProtKB-KW"/>
</dbReference>
<dbReference type="GO" id="GO:0048653">
    <property type="term" value="P:anther development"/>
    <property type="evidence" value="ECO:0000315"/>
    <property type="project" value="UniProtKB"/>
</dbReference>
<dbReference type="GO" id="GO:0009555">
    <property type="term" value="P:pollen development"/>
    <property type="evidence" value="ECO:0000315"/>
    <property type="project" value="UniProtKB"/>
</dbReference>
<dbReference type="GO" id="GO:0006355">
    <property type="term" value="P:regulation of DNA-templated transcription"/>
    <property type="evidence" value="ECO:0007669"/>
    <property type="project" value="InterPro"/>
</dbReference>
<dbReference type="GO" id="GO:0048731">
    <property type="term" value="P:system development"/>
    <property type="evidence" value="ECO:0000318"/>
    <property type="project" value="GO_Central"/>
</dbReference>
<dbReference type="FunFam" id="2.170.150.80:FF:000005">
    <property type="entry name" value="NAC transcription factor 56"/>
    <property type="match status" value="1"/>
</dbReference>
<dbReference type="Gene3D" id="2.170.150.80">
    <property type="entry name" value="NAC domain"/>
    <property type="match status" value="1"/>
</dbReference>
<dbReference type="InterPro" id="IPR003441">
    <property type="entry name" value="NAC-dom"/>
</dbReference>
<dbReference type="InterPro" id="IPR036093">
    <property type="entry name" value="NAC_dom_sf"/>
</dbReference>
<dbReference type="PANTHER" id="PTHR31719:SF248">
    <property type="entry name" value="NAC DOMAIN-CONTAINING PROTEIN 10"/>
    <property type="match status" value="1"/>
</dbReference>
<dbReference type="PANTHER" id="PTHR31719">
    <property type="entry name" value="NAC TRANSCRIPTION FACTOR 56"/>
    <property type="match status" value="1"/>
</dbReference>
<dbReference type="Pfam" id="PF02365">
    <property type="entry name" value="NAM"/>
    <property type="match status" value="1"/>
</dbReference>
<dbReference type="SUPFAM" id="SSF101941">
    <property type="entry name" value="NAC domain"/>
    <property type="match status" value="1"/>
</dbReference>
<dbReference type="PROSITE" id="PS51005">
    <property type="entry name" value="NAC"/>
    <property type="match status" value="1"/>
</dbReference>
<gene>
    <name evidence="5" type="primary">NAC010</name>
    <name evidence="9" type="ordered locus">Os07g0566500</name>
    <name evidence="6" type="ordered locus">LOC_Os07g37920</name>
    <name evidence="8" type="ORF">OJ1092_A07.104</name>
    <name evidence="7" type="ORF">OJ1773_H01.126</name>
    <name evidence="10" type="ORF">OsJ_24777</name>
</gene>
<keyword id="KW-0238">DNA-binding</keyword>
<keyword id="KW-0539">Nucleus</keyword>
<keyword id="KW-1185">Reference proteome</keyword>
<keyword id="KW-0804">Transcription</keyword>
<keyword id="KW-0805">Transcription regulation</keyword>
<feature type="chain" id="PRO_0000420377" description="NAC domain-containing protein 10">
    <location>
        <begin position="1"/>
        <end position="425"/>
    </location>
</feature>
<feature type="domain" description="NAC" evidence="1">
    <location>
        <begin position="29"/>
        <end position="200"/>
    </location>
</feature>
<feature type="DNA-binding region" evidence="1">
    <location>
        <begin position="129"/>
        <end position="206"/>
    </location>
</feature>
<feature type="region of interest" description="Disordered" evidence="2">
    <location>
        <begin position="1"/>
        <end position="34"/>
    </location>
</feature>
<feature type="compositionally biased region" description="Polar residues" evidence="2">
    <location>
        <begin position="1"/>
        <end position="10"/>
    </location>
</feature>
<feature type="compositionally biased region" description="Low complexity" evidence="2">
    <location>
        <begin position="12"/>
        <end position="23"/>
    </location>
</feature>
<feature type="sequence conflict" description="In Ref. 5; AK063406." evidence="6" ref="5">
    <original>R</original>
    <variation>H</variation>
    <location>
        <position position="93"/>
    </location>
</feature>
<comment type="function">
    <text evidence="4">Transcription factor of the NAC family associated with male fertility. Involved in anther development, but not in senescence. Reduced expression of NAC5 via RNAi leads to male-sterility.</text>
</comment>
<comment type="subcellular location">
    <subcellularLocation>
        <location evidence="1">Nucleus</location>
    </subcellularLocation>
</comment>
<comment type="tissue specificity">
    <text evidence="3 4">Highest expression in stamens. Expressed in leaves.</text>
</comment>
<comment type="developmental stage">
    <text evidence="4">Up-regulated during anther and flower development and leaf senescence.</text>
</comment>
<comment type="induction">
    <text evidence="3">Up-regulated by drought, salt and cold treatments.</text>
</comment>
<comment type="domain">
    <text evidence="1">The NAC domain includes a DNA binding domain and a dimerization domain.</text>
</comment>
<protein>
    <recommendedName>
        <fullName evidence="5">NAC domain-containing protein 10</fullName>
        <shortName evidence="5">ONAC010</shortName>
    </recommendedName>
    <alternativeName>
        <fullName evidence="6">NAC transcription factor ONAC010</fullName>
    </alternativeName>
</protein>
<organism>
    <name type="scientific">Oryza sativa subsp. japonica</name>
    <name type="common">Rice</name>
    <dbReference type="NCBI Taxonomy" id="39947"/>
    <lineage>
        <taxon>Eukaryota</taxon>
        <taxon>Viridiplantae</taxon>
        <taxon>Streptophyta</taxon>
        <taxon>Embryophyta</taxon>
        <taxon>Tracheophyta</taxon>
        <taxon>Spermatophyta</taxon>
        <taxon>Magnoliopsida</taxon>
        <taxon>Liliopsida</taxon>
        <taxon>Poales</taxon>
        <taxon>Poaceae</taxon>
        <taxon>BOP clade</taxon>
        <taxon>Oryzoideae</taxon>
        <taxon>Oryzeae</taxon>
        <taxon>Oryzinae</taxon>
        <taxon>Oryza</taxon>
        <taxon>Oryza sativa</taxon>
    </lineage>
</organism>
<sequence>MESPDSSSGSAPPRVLRRQQQQPGSAPELPPGFRFHPTDEELVVHYLKKKAASVPLPVTIIAEVDLYKFDPWDLPEKANFGEQEWYFFSPRDRKYPNGARPNRAATSGYWKATGTDKPIMSSGSTREKVGVKKALVFYRGKPPKGVKTNWIMHEYRLTDTSSSAAAVATTRRPPPPITGGSKGAVSLRLDDWVLCRIYKKTNKAGAGQRSMECEDSVEDAVAAYAPSSQQHATAAAGMAGSDGAGGVAAAHGGDYSSLLHHDSHEDTFLVNGLLTAEDAAGLSTGASSLSQLAAAARAAATPCDATKQLLAPSPTPFNWFEAFLPRAKEFPSGLSRSSRDIGDMSLSSTVDRSLSEAGAVAIDTGDAANGANTMPAFINPLGVQGATYQQHQAIMGASLPSESAAAAAACNFQHPFQLSRVNWDS</sequence>
<accession>Q8H4S4</accession>
<accession>A0A0N7KNP4</accession>
<name>NAC10_ORYSJ</name>